<sequence length="152" mass="17344">MFRGASAINMDAKGRIAIPMRYRDQLHVHGTGVIVITIDIQSQCLLIYPLQEWELIEAKLLTLSDTNPVERSFKRRLLGHAHECELDSHGRVLVPPTLRQYAGLDKKAMLVGLLNKFELWDEAAWQQQMDDSQTLIQSQDLSSQDRLADFSL</sequence>
<name>MRAZ_SHEDO</name>
<keyword id="KW-0963">Cytoplasm</keyword>
<keyword id="KW-0238">DNA-binding</keyword>
<keyword id="KW-1185">Reference proteome</keyword>
<keyword id="KW-0677">Repeat</keyword>
<keyword id="KW-0804">Transcription</keyword>
<keyword id="KW-0805">Transcription regulation</keyword>
<accession>Q12SD5</accession>
<gene>
    <name evidence="1" type="primary">mraZ</name>
    <name type="ordered locus">Sden_0346</name>
</gene>
<proteinExistence type="inferred from homology"/>
<organism>
    <name type="scientific">Shewanella denitrificans (strain OS217 / ATCC BAA-1090 / DSM 15013)</name>
    <dbReference type="NCBI Taxonomy" id="318161"/>
    <lineage>
        <taxon>Bacteria</taxon>
        <taxon>Pseudomonadati</taxon>
        <taxon>Pseudomonadota</taxon>
        <taxon>Gammaproteobacteria</taxon>
        <taxon>Alteromonadales</taxon>
        <taxon>Shewanellaceae</taxon>
        <taxon>Shewanella</taxon>
    </lineage>
</organism>
<feature type="chain" id="PRO_1000062931" description="Transcriptional regulator MraZ">
    <location>
        <begin position="1"/>
        <end position="152"/>
    </location>
</feature>
<feature type="domain" description="SpoVT-AbrB 1" evidence="2">
    <location>
        <begin position="5"/>
        <end position="52"/>
    </location>
</feature>
<feature type="domain" description="SpoVT-AbrB 2" evidence="2">
    <location>
        <begin position="81"/>
        <end position="124"/>
    </location>
</feature>
<dbReference type="EMBL" id="CP000302">
    <property type="protein sequence ID" value="ABE53641.1"/>
    <property type="molecule type" value="Genomic_DNA"/>
</dbReference>
<dbReference type="RefSeq" id="WP_011494808.1">
    <property type="nucleotide sequence ID" value="NC_007954.1"/>
</dbReference>
<dbReference type="SMR" id="Q12SD5"/>
<dbReference type="STRING" id="318161.Sden_0346"/>
<dbReference type="KEGG" id="sdn:Sden_0346"/>
<dbReference type="eggNOG" id="COG2001">
    <property type="taxonomic scope" value="Bacteria"/>
</dbReference>
<dbReference type="HOGENOM" id="CLU_107907_2_0_6"/>
<dbReference type="OrthoDB" id="9807753at2"/>
<dbReference type="Proteomes" id="UP000001982">
    <property type="component" value="Chromosome"/>
</dbReference>
<dbReference type="GO" id="GO:0005737">
    <property type="term" value="C:cytoplasm"/>
    <property type="evidence" value="ECO:0007669"/>
    <property type="project" value="UniProtKB-UniRule"/>
</dbReference>
<dbReference type="GO" id="GO:0009295">
    <property type="term" value="C:nucleoid"/>
    <property type="evidence" value="ECO:0007669"/>
    <property type="project" value="UniProtKB-SubCell"/>
</dbReference>
<dbReference type="GO" id="GO:0003700">
    <property type="term" value="F:DNA-binding transcription factor activity"/>
    <property type="evidence" value="ECO:0007669"/>
    <property type="project" value="UniProtKB-UniRule"/>
</dbReference>
<dbReference type="GO" id="GO:0000976">
    <property type="term" value="F:transcription cis-regulatory region binding"/>
    <property type="evidence" value="ECO:0007669"/>
    <property type="project" value="TreeGrafter"/>
</dbReference>
<dbReference type="GO" id="GO:2000143">
    <property type="term" value="P:negative regulation of DNA-templated transcription initiation"/>
    <property type="evidence" value="ECO:0007669"/>
    <property type="project" value="TreeGrafter"/>
</dbReference>
<dbReference type="CDD" id="cd16321">
    <property type="entry name" value="MraZ_C"/>
    <property type="match status" value="1"/>
</dbReference>
<dbReference type="CDD" id="cd16320">
    <property type="entry name" value="MraZ_N"/>
    <property type="match status" value="1"/>
</dbReference>
<dbReference type="Gene3D" id="3.40.1550.20">
    <property type="entry name" value="Transcriptional regulator MraZ domain"/>
    <property type="match status" value="1"/>
</dbReference>
<dbReference type="HAMAP" id="MF_01008">
    <property type="entry name" value="MraZ"/>
    <property type="match status" value="1"/>
</dbReference>
<dbReference type="InterPro" id="IPR003444">
    <property type="entry name" value="MraZ"/>
</dbReference>
<dbReference type="InterPro" id="IPR035644">
    <property type="entry name" value="MraZ_C"/>
</dbReference>
<dbReference type="InterPro" id="IPR020603">
    <property type="entry name" value="MraZ_dom"/>
</dbReference>
<dbReference type="InterPro" id="IPR035642">
    <property type="entry name" value="MraZ_N"/>
</dbReference>
<dbReference type="InterPro" id="IPR038619">
    <property type="entry name" value="MraZ_sf"/>
</dbReference>
<dbReference type="InterPro" id="IPR007159">
    <property type="entry name" value="SpoVT-AbrB_dom"/>
</dbReference>
<dbReference type="InterPro" id="IPR037914">
    <property type="entry name" value="SpoVT-AbrB_sf"/>
</dbReference>
<dbReference type="NCBIfam" id="TIGR00242">
    <property type="entry name" value="division/cell wall cluster transcriptional repressor MraZ"/>
    <property type="match status" value="1"/>
</dbReference>
<dbReference type="PANTHER" id="PTHR34701">
    <property type="entry name" value="TRANSCRIPTIONAL REGULATOR MRAZ"/>
    <property type="match status" value="1"/>
</dbReference>
<dbReference type="PANTHER" id="PTHR34701:SF1">
    <property type="entry name" value="TRANSCRIPTIONAL REGULATOR MRAZ"/>
    <property type="match status" value="1"/>
</dbReference>
<dbReference type="Pfam" id="PF02381">
    <property type="entry name" value="MraZ"/>
    <property type="match status" value="2"/>
</dbReference>
<dbReference type="SUPFAM" id="SSF89447">
    <property type="entry name" value="AbrB/MazE/MraZ-like"/>
    <property type="match status" value="1"/>
</dbReference>
<dbReference type="PROSITE" id="PS51740">
    <property type="entry name" value="SPOVT_ABRB"/>
    <property type="match status" value="2"/>
</dbReference>
<evidence type="ECO:0000255" key="1">
    <source>
        <dbReference type="HAMAP-Rule" id="MF_01008"/>
    </source>
</evidence>
<evidence type="ECO:0000255" key="2">
    <source>
        <dbReference type="PROSITE-ProRule" id="PRU01076"/>
    </source>
</evidence>
<comment type="subunit">
    <text evidence="1">Forms oligomers.</text>
</comment>
<comment type="subcellular location">
    <subcellularLocation>
        <location evidence="1">Cytoplasm</location>
        <location evidence="1">Nucleoid</location>
    </subcellularLocation>
</comment>
<comment type="similarity">
    <text evidence="1">Belongs to the MraZ family.</text>
</comment>
<protein>
    <recommendedName>
        <fullName>Transcriptional regulator MraZ</fullName>
    </recommendedName>
</protein>
<reference key="1">
    <citation type="submission" date="2006-03" db="EMBL/GenBank/DDBJ databases">
        <title>Complete sequence of Shewanella denitrificans OS217.</title>
        <authorList>
            <consortium name="US DOE Joint Genome Institute"/>
            <person name="Copeland A."/>
            <person name="Lucas S."/>
            <person name="Lapidus A."/>
            <person name="Barry K."/>
            <person name="Detter J.C."/>
            <person name="Glavina del Rio T."/>
            <person name="Hammon N."/>
            <person name="Israni S."/>
            <person name="Dalin E."/>
            <person name="Tice H."/>
            <person name="Pitluck S."/>
            <person name="Brettin T."/>
            <person name="Bruce D."/>
            <person name="Han C."/>
            <person name="Tapia R."/>
            <person name="Gilna P."/>
            <person name="Kiss H."/>
            <person name="Schmutz J."/>
            <person name="Larimer F."/>
            <person name="Land M."/>
            <person name="Hauser L."/>
            <person name="Kyrpides N."/>
            <person name="Lykidis A."/>
            <person name="Richardson P."/>
        </authorList>
    </citation>
    <scope>NUCLEOTIDE SEQUENCE [LARGE SCALE GENOMIC DNA]</scope>
    <source>
        <strain>OS217 / ATCC BAA-1090 / DSM 15013</strain>
    </source>
</reference>